<keyword id="KW-1003">Cell membrane</keyword>
<keyword id="KW-0472">Membrane</keyword>
<keyword id="KW-0812">Transmembrane</keyword>
<keyword id="KW-1133">Transmembrane helix</keyword>
<accession>A1T8Q8</accession>
<gene>
    <name type="ordered locus">Mvan_2751</name>
</gene>
<sequence length="335" mass="36024">MTLPLLGPMSLSGFEHPWFFLFFLVVLGLVALYVIVQMGRHRRMLRFANMELLESVAPKRPSRWRHLPAVLLILSLMSFTVAMAGPTHDVRIPRNRAVVMLVIDVSQSMRATDVAPNRLVAAQEAAKQFADQLTPGINLGLIAYAGTATVLVSPTTNREATKAAIDKLQLADRTATGEGIFTALQAVATVGAVIGGGDEPPPARIVLMSDGKETVPSNPDNPKGAYTAARTAKDQGVPISTVSFGTPYGYVEINDQRQPVPVDDEMLKKIADLSGGDAFTASSLEQLKQVFTNLQEQIGYETIKGDASVGWLRIGSLVLALAALGALLINRRLPN</sequence>
<evidence type="ECO:0000255" key="1">
    <source>
        <dbReference type="HAMAP-Rule" id="MF_01340"/>
    </source>
</evidence>
<reference key="1">
    <citation type="submission" date="2006-12" db="EMBL/GenBank/DDBJ databases">
        <title>Complete sequence of Mycobacterium vanbaalenii PYR-1.</title>
        <authorList>
            <consortium name="US DOE Joint Genome Institute"/>
            <person name="Copeland A."/>
            <person name="Lucas S."/>
            <person name="Lapidus A."/>
            <person name="Barry K."/>
            <person name="Detter J.C."/>
            <person name="Glavina del Rio T."/>
            <person name="Hammon N."/>
            <person name="Israni S."/>
            <person name="Dalin E."/>
            <person name="Tice H."/>
            <person name="Pitluck S."/>
            <person name="Singan V."/>
            <person name="Schmutz J."/>
            <person name="Larimer F."/>
            <person name="Land M."/>
            <person name="Hauser L."/>
            <person name="Kyrpides N."/>
            <person name="Anderson I.J."/>
            <person name="Miller C."/>
            <person name="Richardson P."/>
        </authorList>
    </citation>
    <scope>NUCLEOTIDE SEQUENCE [LARGE SCALE GENOMIC DNA]</scope>
    <source>
        <strain>DSM 7251 / JCM 13017 / BCRC 16820 / KCTC 9966 / NRRL B-24157 / PYR-1</strain>
    </source>
</reference>
<dbReference type="EMBL" id="CP000511">
    <property type="protein sequence ID" value="ABM13558.1"/>
    <property type="molecule type" value="Genomic_DNA"/>
</dbReference>
<dbReference type="RefSeq" id="WP_011779966.1">
    <property type="nucleotide sequence ID" value="NZ_JACKSD010000326.1"/>
</dbReference>
<dbReference type="SMR" id="A1T8Q8"/>
<dbReference type="STRING" id="350058.Mvan_2751"/>
<dbReference type="KEGG" id="mva:Mvan_2751"/>
<dbReference type="eggNOG" id="COG2304">
    <property type="taxonomic scope" value="Bacteria"/>
</dbReference>
<dbReference type="HOGENOM" id="CLU_024570_2_0_11"/>
<dbReference type="Proteomes" id="UP000009159">
    <property type="component" value="Chromosome"/>
</dbReference>
<dbReference type="GO" id="GO:0005886">
    <property type="term" value="C:plasma membrane"/>
    <property type="evidence" value="ECO:0007669"/>
    <property type="project" value="UniProtKB-SubCell"/>
</dbReference>
<dbReference type="CDD" id="cd00198">
    <property type="entry name" value="vWFA"/>
    <property type="match status" value="1"/>
</dbReference>
<dbReference type="Gene3D" id="3.40.50.410">
    <property type="entry name" value="von Willebrand factor, type A domain"/>
    <property type="match status" value="1"/>
</dbReference>
<dbReference type="HAMAP" id="MF_01340">
    <property type="entry name" value="UPF0353"/>
    <property type="match status" value="1"/>
</dbReference>
<dbReference type="InterPro" id="IPR024163">
    <property type="entry name" value="Aerotolerance_reg_N"/>
</dbReference>
<dbReference type="InterPro" id="IPR022933">
    <property type="entry name" value="UPF0353"/>
</dbReference>
<dbReference type="InterPro" id="IPR050768">
    <property type="entry name" value="UPF0353/GerABKA_families"/>
</dbReference>
<dbReference type="InterPro" id="IPR002035">
    <property type="entry name" value="VWF_A"/>
</dbReference>
<dbReference type="InterPro" id="IPR036465">
    <property type="entry name" value="vWFA_dom_sf"/>
</dbReference>
<dbReference type="NCBIfam" id="NF010238">
    <property type="entry name" value="PRK13685.1"/>
    <property type="match status" value="1"/>
</dbReference>
<dbReference type="PANTHER" id="PTHR22550:SF5">
    <property type="entry name" value="LEUCINE ZIPPER PROTEIN 4"/>
    <property type="match status" value="1"/>
</dbReference>
<dbReference type="PANTHER" id="PTHR22550">
    <property type="entry name" value="SPORE GERMINATION PROTEIN"/>
    <property type="match status" value="1"/>
</dbReference>
<dbReference type="Pfam" id="PF07584">
    <property type="entry name" value="BatA"/>
    <property type="match status" value="1"/>
</dbReference>
<dbReference type="Pfam" id="PF13519">
    <property type="entry name" value="VWA_2"/>
    <property type="match status" value="1"/>
</dbReference>
<dbReference type="SMART" id="SM00327">
    <property type="entry name" value="VWA"/>
    <property type="match status" value="1"/>
</dbReference>
<dbReference type="SUPFAM" id="SSF53300">
    <property type="entry name" value="vWA-like"/>
    <property type="match status" value="1"/>
</dbReference>
<dbReference type="PROSITE" id="PS50234">
    <property type="entry name" value="VWFA"/>
    <property type="match status" value="1"/>
</dbReference>
<feature type="chain" id="PRO_1000067658" description="UPF0353 protein Mvan_2751">
    <location>
        <begin position="1"/>
        <end position="335"/>
    </location>
</feature>
<feature type="transmembrane region" description="Helical" evidence="1">
    <location>
        <begin position="18"/>
        <end position="38"/>
    </location>
</feature>
<feature type="transmembrane region" description="Helical" evidence="1">
    <location>
        <begin position="67"/>
        <end position="87"/>
    </location>
</feature>
<feature type="transmembrane region" description="Helical" evidence="1">
    <location>
        <begin position="309"/>
        <end position="329"/>
    </location>
</feature>
<feature type="domain" description="VWFA" evidence="1">
    <location>
        <begin position="98"/>
        <end position="294"/>
    </location>
</feature>
<name>Y2751_MYCVP</name>
<protein>
    <recommendedName>
        <fullName evidence="1">UPF0353 protein Mvan_2751</fullName>
    </recommendedName>
</protein>
<proteinExistence type="inferred from homology"/>
<organism>
    <name type="scientific">Mycolicibacterium vanbaalenii (strain DSM 7251 / JCM 13017 / BCRC 16820 / KCTC 9966 / NRRL B-24157 / PYR-1)</name>
    <name type="common">Mycobacterium vanbaalenii</name>
    <dbReference type="NCBI Taxonomy" id="350058"/>
    <lineage>
        <taxon>Bacteria</taxon>
        <taxon>Bacillati</taxon>
        <taxon>Actinomycetota</taxon>
        <taxon>Actinomycetes</taxon>
        <taxon>Mycobacteriales</taxon>
        <taxon>Mycobacteriaceae</taxon>
        <taxon>Mycolicibacterium</taxon>
    </lineage>
</organism>
<comment type="subcellular location">
    <subcellularLocation>
        <location evidence="1">Cell membrane</location>
        <topology evidence="1">Multi-pass membrane protein</topology>
    </subcellularLocation>
</comment>
<comment type="similarity">
    <text evidence="1">Belongs to the UPF0353 family.</text>
</comment>